<name>METK_PYRNV</name>
<evidence type="ECO:0000255" key="1">
    <source>
        <dbReference type="HAMAP-Rule" id="MF_00136"/>
    </source>
</evidence>
<dbReference type="EC" id="2.5.1.6" evidence="1"/>
<dbReference type="EMBL" id="CP001014">
    <property type="protein sequence ID" value="ACB40890.1"/>
    <property type="molecule type" value="Genomic_DNA"/>
</dbReference>
<dbReference type="RefSeq" id="WP_012351309.1">
    <property type="nucleotide sequence ID" value="NC_010525.1"/>
</dbReference>
<dbReference type="SMR" id="B1YC36"/>
<dbReference type="STRING" id="444157.Tneu_1975"/>
<dbReference type="GeneID" id="6164773"/>
<dbReference type="KEGG" id="tne:Tneu_1975"/>
<dbReference type="eggNOG" id="arCOG01678">
    <property type="taxonomic scope" value="Archaea"/>
</dbReference>
<dbReference type="HOGENOM" id="CLU_057642_0_0_2"/>
<dbReference type="OrthoDB" id="204488at2157"/>
<dbReference type="UniPathway" id="UPA00315">
    <property type="reaction ID" value="UER00080"/>
</dbReference>
<dbReference type="Proteomes" id="UP000001694">
    <property type="component" value="Chromosome"/>
</dbReference>
<dbReference type="GO" id="GO:0005524">
    <property type="term" value="F:ATP binding"/>
    <property type="evidence" value="ECO:0007669"/>
    <property type="project" value="UniProtKB-UniRule"/>
</dbReference>
<dbReference type="GO" id="GO:0000287">
    <property type="term" value="F:magnesium ion binding"/>
    <property type="evidence" value="ECO:0007669"/>
    <property type="project" value="UniProtKB-UniRule"/>
</dbReference>
<dbReference type="GO" id="GO:0004478">
    <property type="term" value="F:methionine adenosyltransferase activity"/>
    <property type="evidence" value="ECO:0007669"/>
    <property type="project" value="UniProtKB-UniRule"/>
</dbReference>
<dbReference type="GO" id="GO:0006730">
    <property type="term" value="P:one-carbon metabolic process"/>
    <property type="evidence" value="ECO:0007669"/>
    <property type="project" value="UniProtKB-KW"/>
</dbReference>
<dbReference type="GO" id="GO:0006556">
    <property type="term" value="P:S-adenosylmethionine biosynthetic process"/>
    <property type="evidence" value="ECO:0007669"/>
    <property type="project" value="UniProtKB-UniRule"/>
</dbReference>
<dbReference type="Gene3D" id="3.30.300.10">
    <property type="match status" value="1"/>
</dbReference>
<dbReference type="Gene3D" id="3.30.300.280">
    <property type="entry name" value="S-adenosylmethionine synthetase, C-terminal domain"/>
    <property type="match status" value="2"/>
</dbReference>
<dbReference type="HAMAP" id="MF_00136">
    <property type="entry name" value="S_AdoMet_synth2"/>
    <property type="match status" value="1"/>
</dbReference>
<dbReference type="InterPro" id="IPR027790">
    <property type="entry name" value="AdoMet_synthase_2_family"/>
</dbReference>
<dbReference type="InterPro" id="IPR042544">
    <property type="entry name" value="AdoMet_synthase_3"/>
</dbReference>
<dbReference type="InterPro" id="IPR002795">
    <property type="entry name" value="S-AdoMet_synthetase_arc"/>
</dbReference>
<dbReference type="NCBIfam" id="NF003365">
    <property type="entry name" value="PRK04439.1-4"/>
    <property type="match status" value="1"/>
</dbReference>
<dbReference type="NCBIfam" id="NF003366">
    <property type="entry name" value="PRK04439.1-5"/>
    <property type="match status" value="1"/>
</dbReference>
<dbReference type="PANTHER" id="PTHR36697">
    <property type="entry name" value="S-ADENOSYLMETHIONINE SYNTHASE"/>
    <property type="match status" value="1"/>
</dbReference>
<dbReference type="PANTHER" id="PTHR36697:SF1">
    <property type="entry name" value="S-ADENOSYLMETHIONINE SYNTHASE"/>
    <property type="match status" value="1"/>
</dbReference>
<dbReference type="Pfam" id="PF01941">
    <property type="entry name" value="AdoMet_Synthase"/>
    <property type="match status" value="1"/>
</dbReference>
<comment type="function">
    <text evidence="1">Catalyzes the formation of S-adenosylmethionine from methionine and ATP.</text>
</comment>
<comment type="catalytic activity">
    <reaction evidence="1">
        <text>L-methionine + ATP + H2O = S-adenosyl-L-methionine + phosphate + diphosphate</text>
        <dbReference type="Rhea" id="RHEA:21080"/>
        <dbReference type="ChEBI" id="CHEBI:15377"/>
        <dbReference type="ChEBI" id="CHEBI:30616"/>
        <dbReference type="ChEBI" id="CHEBI:33019"/>
        <dbReference type="ChEBI" id="CHEBI:43474"/>
        <dbReference type="ChEBI" id="CHEBI:57844"/>
        <dbReference type="ChEBI" id="CHEBI:59789"/>
        <dbReference type="EC" id="2.5.1.6"/>
    </reaction>
</comment>
<comment type="cofactor">
    <cofactor evidence="1">
        <name>Mg(2+)</name>
        <dbReference type="ChEBI" id="CHEBI:18420"/>
    </cofactor>
</comment>
<comment type="pathway">
    <text evidence="1">Amino-acid biosynthesis; S-adenosyl-L-methionine biosynthesis; S-adenosyl-L-methionine from L-methionine: step 1/1.</text>
</comment>
<comment type="similarity">
    <text evidence="1">Belongs to the AdoMet synthase 2 family.</text>
</comment>
<keyword id="KW-0067">ATP-binding</keyword>
<keyword id="KW-0460">Magnesium</keyword>
<keyword id="KW-0547">Nucleotide-binding</keyword>
<keyword id="KW-0554">One-carbon metabolism</keyword>
<keyword id="KW-0808">Transferase</keyword>
<proteinExistence type="inferred from homology"/>
<gene>
    <name evidence="1" type="primary">mat</name>
    <name type="ordered locus">Tneu_1975</name>
</gene>
<organism>
    <name type="scientific">Pyrobaculum neutrophilum (strain DSM 2338 / JCM 9278 / NBRC 100436 / V24Sta)</name>
    <name type="common">Thermoproteus neutrophilus</name>
    <dbReference type="NCBI Taxonomy" id="444157"/>
    <lineage>
        <taxon>Archaea</taxon>
        <taxon>Thermoproteota</taxon>
        <taxon>Thermoprotei</taxon>
        <taxon>Thermoproteales</taxon>
        <taxon>Thermoproteaceae</taxon>
        <taxon>Pyrobaculum</taxon>
    </lineage>
</organism>
<accession>B1YC36</accession>
<reference key="1">
    <citation type="submission" date="2008-03" db="EMBL/GenBank/DDBJ databases">
        <title>Complete sequence of Thermoproteus neutrophilus V24Sta.</title>
        <authorList>
            <consortium name="US DOE Joint Genome Institute"/>
            <person name="Copeland A."/>
            <person name="Lucas S."/>
            <person name="Lapidus A."/>
            <person name="Glavina del Rio T."/>
            <person name="Dalin E."/>
            <person name="Tice H."/>
            <person name="Bruce D."/>
            <person name="Goodwin L."/>
            <person name="Pitluck S."/>
            <person name="Sims D."/>
            <person name="Brettin T."/>
            <person name="Detter J.C."/>
            <person name="Han C."/>
            <person name="Kuske C.R."/>
            <person name="Schmutz J."/>
            <person name="Larimer F."/>
            <person name="Land M."/>
            <person name="Hauser L."/>
            <person name="Kyrpides N."/>
            <person name="Mikhailova N."/>
            <person name="Biddle J.F."/>
            <person name="Zhang Z."/>
            <person name="Fitz-Gibbon S.T."/>
            <person name="Lowe T.M."/>
            <person name="Saltikov C."/>
            <person name="House C.H."/>
            <person name="Richardson P."/>
        </authorList>
    </citation>
    <scope>NUCLEOTIDE SEQUENCE [LARGE SCALE GENOMIC DNA]</scope>
    <source>
        <strain>DSM 2338 / JCM 9278 / NBRC 100436 / V24Sta</strain>
    </source>
</reference>
<sequence length="402" mass="44257">MIVVEKVDKTPVAKRLVEIVERKGQGHPDYIADGISEWVSRYLSRYYLERFGVILHHNVDKTLVVGGQASPRFGGGEVLQPIYILVSGRATSEVRLKDGVVKIPLGPIIIQAARDWIKQHFRYLDPDAHTVIDYKIGQGSADLVGIYDLGVKSVPLANDTSVGVGYAPLTPLEQLVYKTERLLNSRDFKAKYPEVGEDVKVMGVRVGNEVKLTVAAAMISRLVKDKSHYLSVKDDVKKAVEDLASKVAPDYKIDVTINAADKPEHGIFYLTVTGTSAEHGDDGMTGRGNRANGLITPMRSMSLEAAAGKNPVSHVGKIYNVVAQRIADRIYAEAKDIVEVYVEIVSQIGKPINEPKILNIEIIKEGALTGEVKNEAEAIAREELEKITRVTEYILRGEVSLY</sequence>
<feature type="chain" id="PRO_1000095956" description="S-adenosylmethionine synthase">
    <location>
        <begin position="1"/>
        <end position="402"/>
    </location>
</feature>
<feature type="binding site" evidence="1">
    <location>
        <begin position="137"/>
        <end position="142"/>
    </location>
    <ligand>
        <name>ATP</name>
        <dbReference type="ChEBI" id="CHEBI:30616"/>
    </ligand>
</feature>
<protein>
    <recommendedName>
        <fullName evidence="1">S-adenosylmethionine synthase</fullName>
        <shortName evidence="1">AdoMet synthase</shortName>
        <ecNumber evidence="1">2.5.1.6</ecNumber>
    </recommendedName>
    <alternativeName>
        <fullName evidence="1">Methionine adenosyltransferase</fullName>
    </alternativeName>
</protein>